<protein>
    <recommendedName>
        <fullName evidence="2">DNA protection during starvation protein</fullName>
        <ecNumber evidence="2">1.16.-.-</ecNumber>
    </recommendedName>
</protein>
<sequence length="167" mass="18695">MSTAKLVKSKATNLLYTRNDVSDSEKKATVELLNRQVIQFIDLSLITKQAHWNMRGANFIAVHEMLDGFRTALIDHLDTMAERAVQLGGVALGTTQVINSKTPLKSYPLDIHNVQDHLKELADRYAIVANDVRKAIGEAKDDDTADILTAASRDLDKFLWFIESNIE</sequence>
<organism>
    <name type="scientific">Escherichia coli O6:K15:H31 (strain 536 / UPEC)</name>
    <dbReference type="NCBI Taxonomy" id="362663"/>
    <lineage>
        <taxon>Bacteria</taxon>
        <taxon>Pseudomonadati</taxon>
        <taxon>Pseudomonadota</taxon>
        <taxon>Gammaproteobacteria</taxon>
        <taxon>Enterobacterales</taxon>
        <taxon>Enterobacteriaceae</taxon>
        <taxon>Escherichia</taxon>
    </lineage>
</organism>
<reference key="1">
    <citation type="journal article" date="2006" name="Mol. Microbiol.">
        <title>Role of pathogenicity island-associated integrases in the genome plasticity of uropathogenic Escherichia coli strain 536.</title>
        <authorList>
            <person name="Hochhut B."/>
            <person name="Wilde C."/>
            <person name="Balling G."/>
            <person name="Middendorf B."/>
            <person name="Dobrindt U."/>
            <person name="Brzuszkiewicz E."/>
            <person name="Gottschalk G."/>
            <person name="Carniel E."/>
            <person name="Hacker J."/>
        </authorList>
    </citation>
    <scope>NUCLEOTIDE SEQUENCE [LARGE SCALE GENOMIC DNA]</scope>
    <source>
        <strain>536 / UPEC</strain>
    </source>
</reference>
<keyword id="KW-0963">Cytoplasm</keyword>
<keyword id="KW-0226">DNA condensation</keyword>
<keyword id="KW-0238">DNA-binding</keyword>
<keyword id="KW-0408">Iron</keyword>
<keyword id="KW-0409">Iron storage</keyword>
<keyword id="KW-0479">Metal-binding</keyword>
<keyword id="KW-0560">Oxidoreductase</keyword>
<gene>
    <name evidence="2" type="primary">dps</name>
    <name type="ordered locus">ECP_0826</name>
</gene>
<name>DPS_ECOL5</name>
<evidence type="ECO:0000250" key="1"/>
<evidence type="ECO:0000255" key="2">
    <source>
        <dbReference type="HAMAP-Rule" id="MF_01441"/>
    </source>
</evidence>
<comment type="function">
    <text evidence="2">During stationary phase, binds the chromosome non-specifically, forming a highly ordered and stable dps-DNA co-crystal within which chromosomal DNA is condensed and protected from diverse damages. It protects DNA from oxidative damage by sequestering intracellular Fe(2+) ion and storing it in the form of Fe(3+) oxyhydroxide mineral, which can be released after reduction. One hydrogen peroxide oxidizes two Fe(2+) ions, which prevents hydroxyl radical production by the Fenton reaction. Dps also protects the cell from UV and gamma irradiation, iron and copper toxicity, thermal stress and acid and base shocks. Also shows a weak catalase activity.</text>
</comment>
<comment type="catalytic activity">
    <reaction evidence="2">
        <text>2 Fe(2+) + H2O2 + 2 H(+) = 2 Fe(3+) + 2 H2O</text>
        <dbReference type="Rhea" id="RHEA:48712"/>
        <dbReference type="ChEBI" id="CHEBI:15377"/>
        <dbReference type="ChEBI" id="CHEBI:15378"/>
        <dbReference type="ChEBI" id="CHEBI:16240"/>
        <dbReference type="ChEBI" id="CHEBI:29033"/>
        <dbReference type="ChEBI" id="CHEBI:29034"/>
    </reaction>
</comment>
<comment type="subunit">
    <text evidence="2">Homododecamer. The 12 subunits form a hollow sphere into which the mineral iron core of up to 500 Fe(3+) can be deposited.</text>
</comment>
<comment type="subcellular location">
    <subcellularLocation>
        <location evidence="2">Cytoplasm</location>
        <location evidence="2">Nucleoid</location>
    </subcellularLocation>
</comment>
<comment type="similarity">
    <text evidence="2">Belongs to the Dps family.</text>
</comment>
<feature type="initiator methionine" description="Removed" evidence="1">
    <location>
        <position position="1"/>
    </location>
</feature>
<feature type="chain" id="PRO_0000271582" description="DNA protection during starvation protein">
    <location>
        <begin position="2"/>
        <end position="167"/>
    </location>
</feature>
<feature type="binding site" evidence="2">
    <location>
        <position position="51"/>
    </location>
    <ligand>
        <name>Fe cation</name>
        <dbReference type="ChEBI" id="CHEBI:24875"/>
        <label>1</label>
        <note>ligand shared between two dodecameric partners</note>
    </ligand>
</feature>
<feature type="binding site" description="in other chain" evidence="2">
    <location>
        <position position="78"/>
    </location>
    <ligand>
        <name>Fe cation</name>
        <dbReference type="ChEBI" id="CHEBI:24875"/>
        <label>1</label>
        <note>ligand shared between two dodecameric partners</note>
    </ligand>
</feature>
<feature type="binding site" description="in other chain" evidence="2">
    <location>
        <position position="82"/>
    </location>
    <ligand>
        <name>Fe cation</name>
        <dbReference type="ChEBI" id="CHEBI:24875"/>
        <label>1</label>
        <note>ligand shared between two dodecameric partners</note>
    </ligand>
</feature>
<feature type="binding site" evidence="2">
    <location>
        <position position="82"/>
    </location>
    <ligand>
        <name>Fe cation</name>
        <dbReference type="ChEBI" id="CHEBI:24875"/>
        <label>2</label>
    </ligand>
</feature>
<proteinExistence type="inferred from homology"/>
<dbReference type="EC" id="1.16.-.-" evidence="2"/>
<dbReference type="EMBL" id="CP000247">
    <property type="protein sequence ID" value="ABG68845.1"/>
    <property type="molecule type" value="Genomic_DNA"/>
</dbReference>
<dbReference type="RefSeq" id="WP_000100800.1">
    <property type="nucleotide sequence ID" value="NC_008253.1"/>
</dbReference>
<dbReference type="SMR" id="Q0TJN6"/>
<dbReference type="GeneID" id="93776616"/>
<dbReference type="KEGG" id="ecp:ECP_0826"/>
<dbReference type="HOGENOM" id="CLU_098183_1_2_6"/>
<dbReference type="Proteomes" id="UP000009182">
    <property type="component" value="Chromosome"/>
</dbReference>
<dbReference type="GO" id="GO:0005737">
    <property type="term" value="C:cytoplasm"/>
    <property type="evidence" value="ECO:0007669"/>
    <property type="project" value="UniProtKB-UniRule"/>
</dbReference>
<dbReference type="GO" id="GO:0009295">
    <property type="term" value="C:nucleoid"/>
    <property type="evidence" value="ECO:0007669"/>
    <property type="project" value="UniProtKB-SubCell"/>
</dbReference>
<dbReference type="GO" id="GO:0003677">
    <property type="term" value="F:DNA binding"/>
    <property type="evidence" value="ECO:0007669"/>
    <property type="project" value="UniProtKB-UniRule"/>
</dbReference>
<dbReference type="GO" id="GO:0008199">
    <property type="term" value="F:ferric iron binding"/>
    <property type="evidence" value="ECO:0007669"/>
    <property type="project" value="UniProtKB-UniRule"/>
</dbReference>
<dbReference type="GO" id="GO:0016722">
    <property type="term" value="F:oxidoreductase activity, acting on metal ions"/>
    <property type="evidence" value="ECO:0007669"/>
    <property type="project" value="InterPro"/>
</dbReference>
<dbReference type="GO" id="GO:0030261">
    <property type="term" value="P:chromosome condensation"/>
    <property type="evidence" value="ECO:0007669"/>
    <property type="project" value="UniProtKB-KW"/>
</dbReference>
<dbReference type="GO" id="GO:0006879">
    <property type="term" value="P:intracellular iron ion homeostasis"/>
    <property type="evidence" value="ECO:0007669"/>
    <property type="project" value="UniProtKB-KW"/>
</dbReference>
<dbReference type="CDD" id="cd01043">
    <property type="entry name" value="DPS"/>
    <property type="match status" value="1"/>
</dbReference>
<dbReference type="FunFam" id="1.20.1260.10:FF:000003">
    <property type="entry name" value="DNA protection during starvation protein"/>
    <property type="match status" value="1"/>
</dbReference>
<dbReference type="Gene3D" id="1.20.1260.10">
    <property type="match status" value="1"/>
</dbReference>
<dbReference type="HAMAP" id="MF_01441">
    <property type="entry name" value="Dps"/>
    <property type="match status" value="1"/>
</dbReference>
<dbReference type="InterPro" id="IPR002177">
    <property type="entry name" value="DPS_DNA-bd"/>
</dbReference>
<dbReference type="InterPro" id="IPR023188">
    <property type="entry name" value="DPS_DNA-bd_CS"/>
</dbReference>
<dbReference type="InterPro" id="IPR023067">
    <property type="entry name" value="Dps_gammaproteobac"/>
</dbReference>
<dbReference type="InterPro" id="IPR012347">
    <property type="entry name" value="Ferritin-like"/>
</dbReference>
<dbReference type="InterPro" id="IPR009078">
    <property type="entry name" value="Ferritin-like_SF"/>
</dbReference>
<dbReference type="InterPro" id="IPR008331">
    <property type="entry name" value="Ferritin_DPS_dom"/>
</dbReference>
<dbReference type="NCBIfam" id="NF006975">
    <property type="entry name" value="PRK09448.1"/>
    <property type="match status" value="1"/>
</dbReference>
<dbReference type="PANTHER" id="PTHR42932:SF3">
    <property type="entry name" value="DNA PROTECTION DURING STARVATION PROTEIN"/>
    <property type="match status" value="1"/>
</dbReference>
<dbReference type="PANTHER" id="PTHR42932">
    <property type="entry name" value="GENERAL STRESS PROTEIN 20U"/>
    <property type="match status" value="1"/>
</dbReference>
<dbReference type="Pfam" id="PF00210">
    <property type="entry name" value="Ferritin"/>
    <property type="match status" value="1"/>
</dbReference>
<dbReference type="PIRSF" id="PIRSF005900">
    <property type="entry name" value="Dps"/>
    <property type="match status" value="1"/>
</dbReference>
<dbReference type="PRINTS" id="PR01346">
    <property type="entry name" value="HELNAPAPROT"/>
</dbReference>
<dbReference type="SUPFAM" id="SSF47240">
    <property type="entry name" value="Ferritin-like"/>
    <property type="match status" value="1"/>
</dbReference>
<dbReference type="PROSITE" id="PS00818">
    <property type="entry name" value="DPS_1"/>
    <property type="match status" value="1"/>
</dbReference>
<dbReference type="PROSITE" id="PS00819">
    <property type="entry name" value="DPS_2"/>
    <property type="match status" value="1"/>
</dbReference>
<accession>Q0TJN6</accession>